<comment type="function">
    <text evidence="1">Catalyzes the insertion of one atom of molecular oxygen into position 2 of the phenyl ring of 3-(3-hydroxyphenyl)propionate (3-HPP) and hydroxycinnamic acid (3HCI).</text>
</comment>
<comment type="catalytic activity">
    <reaction evidence="1">
        <text>3-(3-hydroxyphenyl)propanoate + NADH + O2 + H(+) = 3-(2,3-dihydroxyphenyl)propanoate + NAD(+) + H2O</text>
        <dbReference type="Rhea" id="RHEA:24785"/>
        <dbReference type="ChEBI" id="CHEBI:15377"/>
        <dbReference type="ChEBI" id="CHEBI:15378"/>
        <dbReference type="ChEBI" id="CHEBI:15379"/>
        <dbReference type="ChEBI" id="CHEBI:46951"/>
        <dbReference type="ChEBI" id="CHEBI:57277"/>
        <dbReference type="ChEBI" id="CHEBI:57540"/>
        <dbReference type="ChEBI" id="CHEBI:57945"/>
        <dbReference type="EC" id="1.14.13.127"/>
    </reaction>
</comment>
<comment type="catalytic activity">
    <reaction evidence="1">
        <text>(2E)-3-(3-hydroxyphenyl)prop-2-enoate + NADH + O2 + H(+) = (2E)-3-(2,3-dihydroxyphenyl)prop-2-enoate + NAD(+) + H2O</text>
        <dbReference type="Rhea" id="RHEA:27846"/>
        <dbReference type="ChEBI" id="CHEBI:15377"/>
        <dbReference type="ChEBI" id="CHEBI:15378"/>
        <dbReference type="ChEBI" id="CHEBI:15379"/>
        <dbReference type="ChEBI" id="CHEBI:47928"/>
        <dbReference type="ChEBI" id="CHEBI:57540"/>
        <dbReference type="ChEBI" id="CHEBI:57945"/>
        <dbReference type="ChEBI" id="CHEBI:58642"/>
        <dbReference type="EC" id="1.14.13.127"/>
    </reaction>
</comment>
<comment type="cofactor">
    <cofactor evidence="1">
        <name>FAD</name>
        <dbReference type="ChEBI" id="CHEBI:57692"/>
    </cofactor>
</comment>
<comment type="pathway">
    <text evidence="1">Aromatic compound metabolism; 3-phenylpropanoate degradation.</text>
</comment>
<comment type="similarity">
    <text evidence="1">Belongs to the PheA/TfdB FAD monooxygenase family.</text>
</comment>
<evidence type="ECO:0000255" key="1">
    <source>
        <dbReference type="HAMAP-Rule" id="MF_01652"/>
    </source>
</evidence>
<sequence length="554" mass="62184">MAIQHPDIQPAVNHSVQVAIAGAGPVGLMMANYLGQMGIDVLVVEKLDKLIDYPRAIGIDDEALRTMQSVGLVENVLPHTTPWHAMRFLTPKGRCFADIQPMTDEFGWPRRNAFIQPQVDAVMLEGLSRFPNVRCLFARELEAFSQQNDEVTLHLKTAEGQRETVKAQWLVACDGGASFVRRTLNVPFEGKTAPNQWIVVDIANDPLSTPHIYLCCDPVRPYVSAALPHAVRRFEFMVMPGETEEQLREPQNMRKLLSKVLPNPDNVELIRQRVYTHNARLAQRFRIDRVLLAGDAAHIMPVWQGQGYNSGMRDAFNLAWKLALVIQGKARDALLDTYQQERRDHAKAMIDLSVTAGNVLAPPKRWQGTLRDGVSWLLNYLPPVKRYFLEMRFKPMPQYYGGALMREGEAKHSPVGKMFIQPKVTLENGDVTLLDNAIGANFAVIGWGCNPLWGMSDEQIQQWRALGTRFIQVVPEVQIHTAQDNHDGVLRVGDTQGRLRSWFAQHNASLVVMRPDRFVAATAIPQTLGKTLNKLASVMTLTRPDADVSVEKVA</sequence>
<accession>B6HZX3</accession>
<gene>
    <name evidence="1" type="primary">mhpA</name>
    <name type="ordered locus">ECSE_0372</name>
</gene>
<reference key="1">
    <citation type="journal article" date="2008" name="DNA Res.">
        <title>Complete genome sequence and comparative analysis of the wild-type commensal Escherichia coli strain SE11 isolated from a healthy adult.</title>
        <authorList>
            <person name="Oshima K."/>
            <person name="Toh H."/>
            <person name="Ogura Y."/>
            <person name="Sasamoto H."/>
            <person name="Morita H."/>
            <person name="Park S.-H."/>
            <person name="Ooka T."/>
            <person name="Iyoda S."/>
            <person name="Taylor T.D."/>
            <person name="Hayashi T."/>
            <person name="Itoh K."/>
            <person name="Hattori M."/>
        </authorList>
    </citation>
    <scope>NUCLEOTIDE SEQUENCE [LARGE SCALE GENOMIC DNA]</scope>
    <source>
        <strain>SE11</strain>
    </source>
</reference>
<protein>
    <recommendedName>
        <fullName evidence="1">3-(3-hydroxy-phenyl)propionate/3-hydroxycinnamic acid hydroxylase</fullName>
        <shortName evidence="1">3-HCI hydroxylase</shortName>
        <shortName evidence="1">3-HPP hydroxylase</shortName>
        <ecNumber evidence="1">1.14.13.127</ecNumber>
    </recommendedName>
</protein>
<name>MHPA_ECOSE</name>
<dbReference type="EC" id="1.14.13.127" evidence="1"/>
<dbReference type="EMBL" id="AP009240">
    <property type="protein sequence ID" value="BAG75896.1"/>
    <property type="molecule type" value="Genomic_DNA"/>
</dbReference>
<dbReference type="RefSeq" id="WP_001007446.1">
    <property type="nucleotide sequence ID" value="NC_011415.1"/>
</dbReference>
<dbReference type="SMR" id="B6HZX3"/>
<dbReference type="KEGG" id="ecy:ECSE_0372"/>
<dbReference type="HOGENOM" id="CLU_009665_20_2_6"/>
<dbReference type="UniPathway" id="UPA00714"/>
<dbReference type="Proteomes" id="UP000008199">
    <property type="component" value="Chromosome"/>
</dbReference>
<dbReference type="GO" id="GO:0008688">
    <property type="term" value="F:3-(3-hydroxyphenyl)propionate hydroxylase activity"/>
    <property type="evidence" value="ECO:0007669"/>
    <property type="project" value="UniProtKB-UniRule"/>
</dbReference>
<dbReference type="GO" id="GO:0071949">
    <property type="term" value="F:FAD binding"/>
    <property type="evidence" value="ECO:0007669"/>
    <property type="project" value="InterPro"/>
</dbReference>
<dbReference type="GO" id="GO:0019622">
    <property type="term" value="P:3-(3-hydroxy)phenylpropionate catabolic process"/>
    <property type="evidence" value="ECO:0007669"/>
    <property type="project" value="UniProtKB-UniRule"/>
</dbReference>
<dbReference type="GO" id="GO:0019380">
    <property type="term" value="P:3-phenylpropionate catabolic process"/>
    <property type="evidence" value="ECO:0007669"/>
    <property type="project" value="UniProtKB-UniPathway"/>
</dbReference>
<dbReference type="FunFam" id="3.30.70.2450:FF:000001">
    <property type="entry name" value="3-(3-hydroxy-phenyl)propionate/3-hydroxycinnamic acid hydroxylase"/>
    <property type="match status" value="1"/>
</dbReference>
<dbReference type="FunFam" id="3.50.50.60:FF:000126">
    <property type="entry name" value="3-(3-hydroxy-phenyl)propionate/3-hydroxycinnamic acid hydroxylase"/>
    <property type="match status" value="1"/>
</dbReference>
<dbReference type="Gene3D" id="3.30.70.2450">
    <property type="match status" value="1"/>
</dbReference>
<dbReference type="Gene3D" id="3.50.50.60">
    <property type="entry name" value="FAD/NAD(P)-binding domain"/>
    <property type="match status" value="1"/>
</dbReference>
<dbReference type="HAMAP" id="MF_01652">
    <property type="entry name" value="MhpA"/>
    <property type="match status" value="1"/>
</dbReference>
<dbReference type="InterPro" id="IPR023786">
    <property type="entry name" value="3-HPP/3HCI_hydroxylase"/>
</dbReference>
<dbReference type="InterPro" id="IPR002938">
    <property type="entry name" value="FAD-bd"/>
</dbReference>
<dbReference type="InterPro" id="IPR036188">
    <property type="entry name" value="FAD/NAD-bd_sf"/>
</dbReference>
<dbReference type="InterPro" id="IPR050631">
    <property type="entry name" value="PheA/TfdB_FAD_monoxygenase"/>
</dbReference>
<dbReference type="NCBIfam" id="NF004827">
    <property type="entry name" value="PRK06183.1-1"/>
    <property type="match status" value="1"/>
</dbReference>
<dbReference type="NCBIfam" id="NF004829">
    <property type="entry name" value="PRK06183.1-3"/>
    <property type="match status" value="1"/>
</dbReference>
<dbReference type="NCBIfam" id="NF004831">
    <property type="entry name" value="PRK06183.1-5"/>
    <property type="match status" value="1"/>
</dbReference>
<dbReference type="PANTHER" id="PTHR43476">
    <property type="entry name" value="3-(3-HYDROXY-PHENYL)PROPIONATE/3-HYDROXYCINNAMIC ACID HYDROXYLASE"/>
    <property type="match status" value="1"/>
</dbReference>
<dbReference type="PANTHER" id="PTHR43476:SF3">
    <property type="entry name" value="FAD-BINDING MONOOXYGENASE"/>
    <property type="match status" value="1"/>
</dbReference>
<dbReference type="Pfam" id="PF01494">
    <property type="entry name" value="FAD_binding_3"/>
    <property type="match status" value="1"/>
</dbReference>
<dbReference type="PRINTS" id="PR00420">
    <property type="entry name" value="RNGMNOXGNASE"/>
</dbReference>
<dbReference type="SUPFAM" id="SSF51905">
    <property type="entry name" value="FAD/NAD(P)-binding domain"/>
    <property type="match status" value="1"/>
</dbReference>
<feature type="chain" id="PRO_1000186996" description="3-(3-hydroxy-phenyl)propionate/3-hydroxycinnamic acid hydroxylase">
    <location>
        <begin position="1"/>
        <end position="554"/>
    </location>
</feature>
<feature type="binding site" evidence="1">
    <location>
        <begin position="17"/>
        <end position="46"/>
    </location>
    <ligand>
        <name>FAD</name>
        <dbReference type="ChEBI" id="CHEBI:57692"/>
    </ligand>
</feature>
<feature type="binding site" evidence="1">
    <location>
        <begin position="285"/>
        <end position="295"/>
    </location>
    <ligand>
        <name>FAD</name>
        <dbReference type="ChEBI" id="CHEBI:57692"/>
    </ligand>
</feature>
<keyword id="KW-0058">Aromatic hydrocarbons catabolism</keyword>
<keyword id="KW-0274">FAD</keyword>
<keyword id="KW-0285">Flavoprotein</keyword>
<keyword id="KW-0520">NAD</keyword>
<keyword id="KW-0560">Oxidoreductase</keyword>
<proteinExistence type="inferred from homology"/>
<organism>
    <name type="scientific">Escherichia coli (strain SE11)</name>
    <dbReference type="NCBI Taxonomy" id="409438"/>
    <lineage>
        <taxon>Bacteria</taxon>
        <taxon>Pseudomonadati</taxon>
        <taxon>Pseudomonadota</taxon>
        <taxon>Gammaproteobacteria</taxon>
        <taxon>Enterobacterales</taxon>
        <taxon>Enterobacteriaceae</taxon>
        <taxon>Escherichia</taxon>
    </lineage>
</organism>